<organism>
    <name type="scientific">Dictyostelium discoideum</name>
    <name type="common">Social amoeba</name>
    <dbReference type="NCBI Taxonomy" id="44689"/>
    <lineage>
        <taxon>Eukaryota</taxon>
        <taxon>Amoebozoa</taxon>
        <taxon>Evosea</taxon>
        <taxon>Eumycetozoa</taxon>
        <taxon>Dictyostelia</taxon>
        <taxon>Dictyosteliales</taxon>
        <taxon>Dictyosteliaceae</taxon>
        <taxon>Dictyostelium</taxon>
    </lineage>
</organism>
<reference key="1">
    <citation type="journal article" date="1987" name="Proc. Natl. Acad. Sci. U.S.A.">
        <title>Cloning and cDNA sequence of the regulatory subunit of cAMP-dependent protein kinase from Dictyostelium discoideum.</title>
        <authorList>
            <person name="Mutzel R."/>
            <person name="Lacombe M.-L."/>
            <person name="Simon M.-N."/>
            <person name="de Gunzburg J."/>
            <person name="Veron M."/>
        </authorList>
    </citation>
    <scope>NUCLEOTIDE SEQUENCE [MRNA]</scope>
</reference>
<reference key="2">
    <citation type="journal article" date="2005" name="Nature">
        <title>The genome of the social amoeba Dictyostelium discoideum.</title>
        <authorList>
            <person name="Eichinger L."/>
            <person name="Pachebat J.A."/>
            <person name="Gloeckner G."/>
            <person name="Rajandream M.A."/>
            <person name="Sucgang R."/>
            <person name="Berriman M."/>
            <person name="Song J."/>
            <person name="Olsen R."/>
            <person name="Szafranski K."/>
            <person name="Xu Q."/>
            <person name="Tunggal B."/>
            <person name="Kummerfeld S."/>
            <person name="Madera M."/>
            <person name="Konfortov B.A."/>
            <person name="Rivero F."/>
            <person name="Bankier A.T."/>
            <person name="Lehmann R."/>
            <person name="Hamlin N."/>
            <person name="Davies R."/>
            <person name="Gaudet P."/>
            <person name="Fey P."/>
            <person name="Pilcher K."/>
            <person name="Chen G."/>
            <person name="Saunders D."/>
            <person name="Sodergren E.J."/>
            <person name="Davis P."/>
            <person name="Kerhornou A."/>
            <person name="Nie X."/>
            <person name="Hall N."/>
            <person name="Anjard C."/>
            <person name="Hemphill L."/>
            <person name="Bason N."/>
            <person name="Farbrother P."/>
            <person name="Desany B."/>
            <person name="Just E."/>
            <person name="Morio T."/>
            <person name="Rost R."/>
            <person name="Churcher C.M."/>
            <person name="Cooper J."/>
            <person name="Haydock S."/>
            <person name="van Driessche N."/>
            <person name="Cronin A."/>
            <person name="Goodhead I."/>
            <person name="Muzny D.M."/>
            <person name="Mourier T."/>
            <person name="Pain A."/>
            <person name="Lu M."/>
            <person name="Harper D."/>
            <person name="Lindsay R."/>
            <person name="Hauser H."/>
            <person name="James K.D."/>
            <person name="Quiles M."/>
            <person name="Madan Babu M."/>
            <person name="Saito T."/>
            <person name="Buchrieser C."/>
            <person name="Wardroper A."/>
            <person name="Felder M."/>
            <person name="Thangavelu M."/>
            <person name="Johnson D."/>
            <person name="Knights A."/>
            <person name="Loulseged H."/>
            <person name="Mungall K.L."/>
            <person name="Oliver K."/>
            <person name="Price C."/>
            <person name="Quail M.A."/>
            <person name="Urushihara H."/>
            <person name="Hernandez J."/>
            <person name="Rabbinowitsch E."/>
            <person name="Steffen D."/>
            <person name="Sanders M."/>
            <person name="Ma J."/>
            <person name="Kohara Y."/>
            <person name="Sharp S."/>
            <person name="Simmonds M.N."/>
            <person name="Spiegler S."/>
            <person name="Tivey A."/>
            <person name="Sugano S."/>
            <person name="White B."/>
            <person name="Walker D."/>
            <person name="Woodward J.R."/>
            <person name="Winckler T."/>
            <person name="Tanaka Y."/>
            <person name="Shaulsky G."/>
            <person name="Schleicher M."/>
            <person name="Weinstock G.M."/>
            <person name="Rosenthal A."/>
            <person name="Cox E.C."/>
            <person name="Chisholm R.L."/>
            <person name="Gibbs R.A."/>
            <person name="Loomis W.F."/>
            <person name="Platzer M."/>
            <person name="Kay R.R."/>
            <person name="Williams J.G."/>
            <person name="Dear P.H."/>
            <person name="Noegel A.A."/>
            <person name="Barrell B.G."/>
            <person name="Kuspa A."/>
        </authorList>
    </citation>
    <scope>NUCLEOTIDE SEQUENCE [LARGE SCALE GENOMIC DNA]</scope>
    <source>
        <strain>AX4</strain>
    </source>
</reference>
<reference key="3">
    <citation type="journal article" date="1992" name="Nature">
        <title>Mutation of protein kinase A causes heterochronic development of Dictyostelium.</title>
        <authorList>
            <person name="Simon M.-N."/>
            <person name="Pelegrini O."/>
            <person name="Veron M."/>
            <person name="Kay R.R."/>
        </authorList>
    </citation>
    <scope>MUTAGENESIS OF ALA-30</scope>
</reference>
<reference key="4">
    <citation type="journal article" date="1998" name="EMBO J.">
        <title>Evidence that the RdeA protein is a component of a multistep phosphorelay modulating rate of development in Dictyostelium.</title>
        <authorList>
            <person name="Chang W.-T."/>
            <person name="Thomason P.A."/>
            <person name="Gross J.D."/>
            <person name="Neweil P.C."/>
        </authorList>
    </citation>
    <scope>DISRUPTION PHENOTYPE</scope>
</reference>
<feature type="chain" id="PRO_0000205395" description="cAMP-dependent protein kinase regulatory subunit">
    <location>
        <begin position="1"/>
        <end position="327"/>
    </location>
</feature>
<feature type="region of interest" description="Dimerization and phosphorylation">
    <location>
        <begin position="1"/>
        <end position="65"/>
    </location>
</feature>
<feature type="region of interest" description="Disordered" evidence="2">
    <location>
        <begin position="1"/>
        <end position="47"/>
    </location>
</feature>
<feature type="short sequence motif" description="Pseudophosphorylation motif">
    <location>
        <begin position="27"/>
        <end position="31"/>
    </location>
</feature>
<feature type="binding site">
    <location>
        <begin position="66"/>
        <end position="188"/>
    </location>
    <ligand>
        <name>3',5'-cyclic AMP</name>
        <dbReference type="ChEBI" id="CHEBI:58165"/>
        <label>1</label>
        <note>high affinity</note>
    </ligand>
</feature>
<feature type="binding site">
    <location>
        <position position="136"/>
    </location>
    <ligand>
        <name>3',5'-cyclic AMP</name>
        <dbReference type="ChEBI" id="CHEBI:58165"/>
        <label>1</label>
        <note>high affinity</note>
    </ligand>
</feature>
<feature type="binding site">
    <location>
        <position position="145"/>
    </location>
    <ligand>
        <name>3',5'-cyclic AMP</name>
        <dbReference type="ChEBI" id="CHEBI:58165"/>
        <label>1</label>
        <note>high affinity</note>
    </ligand>
</feature>
<feature type="binding site">
    <location>
        <begin position="189"/>
        <end position="327"/>
    </location>
    <ligand>
        <name>3',5'-cyclic AMP</name>
        <dbReference type="ChEBI" id="CHEBI:58165"/>
        <label>2</label>
        <note>low affinity</note>
    </ligand>
</feature>
<feature type="binding site">
    <location>
        <position position="262"/>
    </location>
    <ligand>
        <name>3',5'-cyclic AMP</name>
        <dbReference type="ChEBI" id="CHEBI:58165"/>
        <label>2</label>
        <note>low affinity</note>
    </ligand>
</feature>
<feature type="binding site">
    <location>
        <position position="271"/>
    </location>
    <ligand>
        <name>3',5'-cyclic AMP</name>
        <dbReference type="ChEBI" id="CHEBI:58165"/>
        <label>2</label>
        <note>low affinity</note>
    </ligand>
</feature>
<feature type="modified residue" description="Phosphoserine" evidence="1">
    <location>
        <position position="32"/>
    </location>
</feature>
<feature type="mutagenesis site" description="In rdeC; aggregation is followed abruptly by the maturation of spore and stalk cells. This is a due to mutation(s) in the R subunit. The mutant R subunit binds cAMP but inhibits poorly the enzymatic activity of the C subunit." evidence="3">
    <original>A</original>
    <variation>T</variation>
    <location>
        <position position="30"/>
    </location>
</feature>
<sequence>MTNNISHNQKATEKVEAQNNNNITRKRRGAISSEPLGDKPATPLPNIPKTVETQQRLEQALSNNIMFSHLEEEERNVVFLAMVEVLYKAGDIIIKQGDEGDLFYVIDSGICDIYVCQNGGSPTLVMEVFEGGSFGELALIYGSPRAATVIARTDVRLWALNGATYRRILMDQTIKKRKLYEEFLEKVSILRHIDKYERVSLADALEPVNFQDGEVIVRQGDPGDRFYIIVEGKVVVTQETVPGDHSTSHVVSELHPSDYFGEIALLTDRPRAATVTSIGYTKCVELDRQRFNRLCGPIDQMLRRNMETYNQFLNRPPSSPNLTSQKS</sequence>
<evidence type="ECO:0000250" key="1"/>
<evidence type="ECO:0000256" key="2">
    <source>
        <dbReference type="SAM" id="MobiDB-lite"/>
    </source>
</evidence>
<evidence type="ECO:0000269" key="3">
    <source>
    </source>
</evidence>
<evidence type="ECO:0000269" key="4">
    <source>
    </source>
</evidence>
<evidence type="ECO:0000305" key="5"/>
<keyword id="KW-0114">cAMP</keyword>
<keyword id="KW-0116">cAMP-binding</keyword>
<keyword id="KW-0547">Nucleotide-binding</keyword>
<keyword id="KW-0597">Phosphoprotein</keyword>
<keyword id="KW-1185">Reference proteome</keyword>
<keyword id="KW-0677">Repeat</keyword>
<name>KAPR_DICDI</name>
<gene>
    <name type="primary">pkaR</name>
    <name type="synonym">rdeC</name>
    <name type="ORF">DDB_G0279413</name>
</gene>
<accession>P05987</accession>
<accession>Q54WN1</accession>
<dbReference type="EMBL" id="M15081">
    <property type="protein sequence ID" value="AAA33236.1"/>
    <property type="molecule type" value="mRNA"/>
</dbReference>
<dbReference type="EMBL" id="AAFI02000031">
    <property type="protein sequence ID" value="EAL67645.1"/>
    <property type="molecule type" value="Genomic_DNA"/>
</dbReference>
<dbReference type="PIR" id="A29076">
    <property type="entry name" value="OKDDRC"/>
</dbReference>
<dbReference type="RefSeq" id="XP_641686.1">
    <property type="nucleotide sequence ID" value="XM_636594.1"/>
</dbReference>
<dbReference type="SMR" id="P05987"/>
<dbReference type="FunCoup" id="P05987">
    <property type="interactions" value="122"/>
</dbReference>
<dbReference type="STRING" id="44689.P05987"/>
<dbReference type="PaxDb" id="44689-DDB0214950"/>
<dbReference type="EnsemblProtists" id="EAL67645">
    <property type="protein sequence ID" value="EAL67645"/>
    <property type="gene ID" value="DDB_G0279413"/>
</dbReference>
<dbReference type="GeneID" id="8622094"/>
<dbReference type="KEGG" id="ddi:DDB_G0279413"/>
<dbReference type="dictyBase" id="DDB_G0279413">
    <property type="gene designation" value="pkaR"/>
</dbReference>
<dbReference type="VEuPathDB" id="AmoebaDB:DDB_G0279413"/>
<dbReference type="eggNOG" id="KOG1113">
    <property type="taxonomic scope" value="Eukaryota"/>
</dbReference>
<dbReference type="HOGENOM" id="CLU_018310_1_1_1"/>
<dbReference type="InParanoid" id="P05987"/>
<dbReference type="OMA" id="PHPTIHE"/>
<dbReference type="PhylomeDB" id="P05987"/>
<dbReference type="PRO" id="PR:P05987"/>
<dbReference type="Proteomes" id="UP000002195">
    <property type="component" value="Chromosome 3"/>
</dbReference>
<dbReference type="GO" id="GO:0005952">
    <property type="term" value="C:cAMP-dependent protein kinase complex"/>
    <property type="evidence" value="ECO:0000314"/>
    <property type="project" value="dictyBase"/>
</dbReference>
<dbReference type="GO" id="GO:0005813">
    <property type="term" value="C:centrosome"/>
    <property type="evidence" value="ECO:0000304"/>
    <property type="project" value="dictyBase"/>
</dbReference>
<dbReference type="GO" id="GO:0005829">
    <property type="term" value="C:cytosol"/>
    <property type="evidence" value="ECO:0000318"/>
    <property type="project" value="GO_Central"/>
</dbReference>
<dbReference type="GO" id="GO:0030552">
    <property type="term" value="F:cAMP binding"/>
    <property type="evidence" value="ECO:0000314"/>
    <property type="project" value="dictyBase"/>
</dbReference>
<dbReference type="GO" id="GO:0004862">
    <property type="term" value="F:cAMP-dependent protein kinase inhibitor activity"/>
    <property type="evidence" value="ECO:0000314"/>
    <property type="project" value="dictyBase"/>
</dbReference>
<dbReference type="GO" id="GO:0008603">
    <property type="term" value="F:cAMP-dependent protein kinase regulator activity"/>
    <property type="evidence" value="ECO:0000314"/>
    <property type="project" value="dictyBase"/>
</dbReference>
<dbReference type="GO" id="GO:0034236">
    <property type="term" value="F:protein kinase A catalytic subunit binding"/>
    <property type="evidence" value="ECO:0000353"/>
    <property type="project" value="dictyBase"/>
</dbReference>
<dbReference type="GO" id="GO:0007189">
    <property type="term" value="P:adenylate cyclase-activating G protein-coupled receptor signaling pathway"/>
    <property type="evidence" value="ECO:0000318"/>
    <property type="project" value="GO_Central"/>
</dbReference>
<dbReference type="GO" id="GO:0061939">
    <property type="term" value="P:c-di-GMP signaling"/>
    <property type="evidence" value="ECO:0000315"/>
    <property type="project" value="dictyBase"/>
</dbReference>
<dbReference type="GO" id="GO:0031154">
    <property type="term" value="P:culmination involved in sorocarp development"/>
    <property type="evidence" value="ECO:0000315"/>
    <property type="project" value="dictyBase"/>
</dbReference>
<dbReference type="GO" id="GO:0010628">
    <property type="term" value="P:positive regulation of gene expression"/>
    <property type="evidence" value="ECO:0000314"/>
    <property type="project" value="dictyBase"/>
</dbReference>
<dbReference type="GO" id="GO:0106070">
    <property type="term" value="P:regulation of adenylate cyclase-activating G protein-coupled receptor signaling pathway"/>
    <property type="evidence" value="ECO:0000315"/>
    <property type="project" value="dictyBase"/>
</dbReference>
<dbReference type="GO" id="GO:0010468">
    <property type="term" value="P:regulation of gene expression"/>
    <property type="evidence" value="ECO:0000315"/>
    <property type="project" value="dictyBase"/>
</dbReference>
<dbReference type="GO" id="GO:0010738">
    <property type="term" value="P:regulation of protein kinase A signaling"/>
    <property type="evidence" value="ECO:0000315"/>
    <property type="project" value="dictyBase"/>
</dbReference>
<dbReference type="GO" id="GO:0031156">
    <property type="term" value="P:regulation of sorocarp development"/>
    <property type="evidence" value="ECO:0000315"/>
    <property type="project" value="dictyBase"/>
</dbReference>
<dbReference type="GO" id="GO:0031285">
    <property type="term" value="P:regulation of sorocarp stalk cell differentiation"/>
    <property type="evidence" value="ECO:0000316"/>
    <property type="project" value="dictyBase"/>
</dbReference>
<dbReference type="GO" id="GO:1904643">
    <property type="term" value="P:response to curcumin"/>
    <property type="evidence" value="ECO:0000315"/>
    <property type="project" value="dictyBase"/>
</dbReference>
<dbReference type="GO" id="GO:0031288">
    <property type="term" value="P:sorocarp morphogenesis"/>
    <property type="evidence" value="ECO:0000315"/>
    <property type="project" value="dictyBase"/>
</dbReference>
<dbReference type="GO" id="GO:0030435">
    <property type="term" value="P:sporulation resulting in formation of a cellular spore"/>
    <property type="evidence" value="ECO:0000315"/>
    <property type="project" value="dictyBase"/>
</dbReference>
<dbReference type="CDD" id="cd00038">
    <property type="entry name" value="CAP_ED"/>
    <property type="match status" value="2"/>
</dbReference>
<dbReference type="FunFam" id="2.60.120.10:FF:000120">
    <property type="entry name" value="cAMP-dependent protein kinase regulatory subunit"/>
    <property type="match status" value="1"/>
</dbReference>
<dbReference type="FunFam" id="2.60.120.10:FF:000006">
    <property type="entry name" value="cAMP-dependent protein kinase type I-alpha regulatory subunit"/>
    <property type="match status" value="1"/>
</dbReference>
<dbReference type="Gene3D" id="2.60.120.10">
    <property type="entry name" value="Jelly Rolls"/>
    <property type="match status" value="2"/>
</dbReference>
<dbReference type="InterPro" id="IPR050503">
    <property type="entry name" value="cAMP-dep_PK_reg_su-like"/>
</dbReference>
<dbReference type="InterPro" id="IPR012198">
    <property type="entry name" value="cAMP_dep_PK_reg_su"/>
</dbReference>
<dbReference type="InterPro" id="IPR018488">
    <property type="entry name" value="cNMP-bd_CS"/>
</dbReference>
<dbReference type="InterPro" id="IPR000595">
    <property type="entry name" value="cNMP-bd_dom"/>
</dbReference>
<dbReference type="InterPro" id="IPR018490">
    <property type="entry name" value="cNMP-bd_dom_sf"/>
</dbReference>
<dbReference type="InterPro" id="IPR014710">
    <property type="entry name" value="RmlC-like_jellyroll"/>
</dbReference>
<dbReference type="PANTHER" id="PTHR11635">
    <property type="entry name" value="CAMP-DEPENDENT PROTEIN KINASE REGULATORY CHAIN"/>
    <property type="match status" value="1"/>
</dbReference>
<dbReference type="PANTHER" id="PTHR11635:SF152">
    <property type="entry name" value="CAMP-DEPENDENT PROTEIN KINASE TYPE I REGULATORY SUBUNIT-RELATED"/>
    <property type="match status" value="1"/>
</dbReference>
<dbReference type="Pfam" id="PF00027">
    <property type="entry name" value="cNMP_binding"/>
    <property type="match status" value="2"/>
</dbReference>
<dbReference type="PIRSF" id="PIRSF000548">
    <property type="entry name" value="PK_regulatory"/>
    <property type="match status" value="1"/>
</dbReference>
<dbReference type="PRINTS" id="PR00103">
    <property type="entry name" value="CAMPKINASE"/>
</dbReference>
<dbReference type="SMART" id="SM00100">
    <property type="entry name" value="cNMP"/>
    <property type="match status" value="2"/>
</dbReference>
<dbReference type="SUPFAM" id="SSF51206">
    <property type="entry name" value="cAMP-binding domain-like"/>
    <property type="match status" value="2"/>
</dbReference>
<dbReference type="PROSITE" id="PS00888">
    <property type="entry name" value="CNMP_BINDING_1"/>
    <property type="match status" value="2"/>
</dbReference>
<dbReference type="PROSITE" id="PS00889">
    <property type="entry name" value="CNMP_BINDING_2"/>
    <property type="match status" value="2"/>
</dbReference>
<dbReference type="PROSITE" id="PS50042">
    <property type="entry name" value="CNMP_BINDING_3"/>
    <property type="match status" value="2"/>
</dbReference>
<protein>
    <recommendedName>
        <fullName>cAMP-dependent protein kinase regulatory subunit</fullName>
    </recommendedName>
    <alternativeName>
        <fullName>Protein kinase A, regulatory subunit</fullName>
    </alternativeName>
    <alternativeName>
        <fullName>Rapid development protein C</fullName>
    </alternativeName>
</protein>
<comment type="subunit">
    <text>In Dictyostelium the holoenzyme is a dimer composed of a regulatory (R) and a catalytic (C) subunit. In the presence of cAMP it dissociates into the active C subunit and an R monomer. In other eukaryotes the holoenzyme is a tetramer composed of 2 regulatory (R) and 2 catalytic (C) subunits. In the presence of cAMP it dissociates into active monomeric C subunits and an R dimer.</text>
</comment>
<comment type="domain">
    <text>Lacks the N-terminal domain required for the association of regulatory subunits into dimers in other eukaryotes.</text>
</comment>
<comment type="PTM">
    <text>The pseudophosphorylation site binds to the substrate-binding region of the catalytic chain but is not phosphorylated. The physiological significance of phosphorylations by other kinases is unclear.</text>
</comment>
<comment type="disruption phenotype">
    <text evidence="4">AcaA and pkaR double mutant shows no abolition of the ability to sporulate.</text>
</comment>
<comment type="miscellaneous">
    <text>In D.discoideum each R subunit carries only 1 high-affinity cAMP binding site (2 in other eukaryotes).</text>
</comment>
<comment type="similarity">
    <text evidence="5">Belongs to the cAMP-dependent kinase regulatory chain family.</text>
</comment>
<proteinExistence type="evidence at protein level"/>